<organism>
    <name type="scientific">Arbacia lixula</name>
    <name type="common">Black urchin</name>
    <name type="synonym">Echinus lixula</name>
    <dbReference type="NCBI Taxonomy" id="7640"/>
    <lineage>
        <taxon>Eukaryota</taxon>
        <taxon>Metazoa</taxon>
        <taxon>Echinodermata</taxon>
        <taxon>Eleutherozoa</taxon>
        <taxon>Echinozoa</taxon>
        <taxon>Echinoidea</taxon>
        <taxon>Euechinoidea</taxon>
        <taxon>Echinacea</taxon>
        <taxon>Arbacioida</taxon>
        <taxon>Arbaciidae</taxon>
        <taxon>Arbacia</taxon>
    </lineage>
</organism>
<keyword id="KW-0249">Electron transport</keyword>
<keyword id="KW-0472">Membrane</keyword>
<keyword id="KW-0496">Mitochondrion</keyword>
<keyword id="KW-0999">Mitochondrion inner membrane</keyword>
<keyword id="KW-0520">NAD</keyword>
<keyword id="KW-0679">Respiratory chain</keyword>
<keyword id="KW-1278">Translocase</keyword>
<keyword id="KW-0812">Transmembrane</keyword>
<keyword id="KW-1133">Transmembrane helix</keyword>
<keyword id="KW-0813">Transport</keyword>
<keyword id="KW-0830">Ubiquinone</keyword>
<protein>
    <recommendedName>
        <fullName>NADH-ubiquinone oxidoreductase chain 5</fullName>
        <ecNumber>7.1.1.2</ecNumber>
    </recommendedName>
    <alternativeName>
        <fullName>NADH dehydrogenase subunit 5</fullName>
    </alternativeName>
</protein>
<proteinExistence type="inferred from homology"/>
<dbReference type="EC" id="7.1.1.2"/>
<dbReference type="EMBL" id="M74839">
    <property type="protein sequence ID" value="AAA98047.1"/>
    <property type="molecule type" value="Genomic_DNA"/>
</dbReference>
<dbReference type="EMBL" id="M79454">
    <property type="protein sequence ID" value="AAA31639.2"/>
    <property type="molecule type" value="Genomic_DNA"/>
</dbReference>
<dbReference type="SMR" id="Q33753"/>
<dbReference type="GO" id="GO:0005743">
    <property type="term" value="C:mitochondrial inner membrane"/>
    <property type="evidence" value="ECO:0007669"/>
    <property type="project" value="UniProtKB-SubCell"/>
</dbReference>
<dbReference type="GO" id="GO:0008137">
    <property type="term" value="F:NADH dehydrogenase (ubiquinone) activity"/>
    <property type="evidence" value="ECO:0007669"/>
    <property type="project" value="UniProtKB-EC"/>
</dbReference>
<dbReference type="GO" id="GO:0042773">
    <property type="term" value="P:ATP synthesis coupled electron transport"/>
    <property type="evidence" value="ECO:0007669"/>
    <property type="project" value="InterPro"/>
</dbReference>
<dbReference type="GO" id="GO:0015990">
    <property type="term" value="P:electron transport coupled proton transport"/>
    <property type="evidence" value="ECO:0007669"/>
    <property type="project" value="TreeGrafter"/>
</dbReference>
<dbReference type="InterPro" id="IPR003945">
    <property type="entry name" value="NU5C-like"/>
</dbReference>
<dbReference type="InterPro" id="IPR001516">
    <property type="entry name" value="Proton_antipo_N"/>
</dbReference>
<dbReference type="PANTHER" id="PTHR42829">
    <property type="entry name" value="NADH-UBIQUINONE OXIDOREDUCTASE CHAIN 5"/>
    <property type="match status" value="1"/>
</dbReference>
<dbReference type="PANTHER" id="PTHR42829:SF2">
    <property type="entry name" value="NADH-UBIQUINONE OXIDOREDUCTASE CHAIN 5"/>
    <property type="match status" value="1"/>
</dbReference>
<dbReference type="Pfam" id="PF00662">
    <property type="entry name" value="Proton_antipo_N"/>
    <property type="match status" value="1"/>
</dbReference>
<accession>Q33753</accession>
<accession>Q33755</accession>
<reference key="1">
    <citation type="journal article" date="1991" name="Mol. Biol. Evol.">
        <title>Mitochondrial DNA in the sea urchin Arbacia lixula: evolutionary inferences from nucleotide sequence analysis.</title>
        <authorList>
            <person name="de Giorgi C."/>
            <person name="Lanave C."/>
            <person name="Musci M.D."/>
            <person name="Saccone C."/>
        </authorList>
    </citation>
    <scope>NUCLEOTIDE SEQUENCE [GENOMIC DNA]</scope>
</reference>
<reference key="2">
    <citation type="journal article" date="1991" name="Gene">
        <title>Mitochondrial DNA in the sea urchin Arbacia lixula: nucleotide sequence differences between two polymorphic molecules indicate asymmetry of mutations.</title>
        <authorList>
            <person name="de Giorgi C."/>
            <person name="de Luca F."/>
            <person name="Saccone C."/>
        </authorList>
    </citation>
    <scope>NUCLEOTIDE SEQUENCE [GENOMIC DNA] OF 1-80</scope>
</reference>
<comment type="function">
    <text evidence="1">Core subunit of the mitochondrial membrane respiratory chain NADH dehydrogenase (Complex I) that is believed to belong to the minimal assembly required for catalysis. Complex I functions in the transfer of electrons from NADH to the respiratory chain. The immediate electron acceptor for the enzyme is believed to be ubiquinone (By similarity).</text>
</comment>
<comment type="catalytic activity">
    <reaction>
        <text>a ubiquinone + NADH + 5 H(+)(in) = a ubiquinol + NAD(+) + 4 H(+)(out)</text>
        <dbReference type="Rhea" id="RHEA:29091"/>
        <dbReference type="Rhea" id="RHEA-COMP:9565"/>
        <dbReference type="Rhea" id="RHEA-COMP:9566"/>
        <dbReference type="ChEBI" id="CHEBI:15378"/>
        <dbReference type="ChEBI" id="CHEBI:16389"/>
        <dbReference type="ChEBI" id="CHEBI:17976"/>
        <dbReference type="ChEBI" id="CHEBI:57540"/>
        <dbReference type="ChEBI" id="CHEBI:57945"/>
        <dbReference type="EC" id="7.1.1.2"/>
    </reaction>
</comment>
<comment type="subcellular location">
    <subcellularLocation>
        <location evidence="1">Mitochondrion inner membrane</location>
        <topology evidence="1">Multi-pass membrane protein</topology>
    </subcellularLocation>
</comment>
<comment type="similarity">
    <text evidence="3">Belongs to the complex I subunit 5 family.</text>
</comment>
<evidence type="ECO:0000250" key="1"/>
<evidence type="ECO:0000255" key="2"/>
<evidence type="ECO:0000305" key="3"/>
<sequence length="190" mass="21157">MVISPSTLLVSITLSIICLIVSILYTSKSFVAQRNFLTSGNIAFSGASLNITSDGSAVYSWTNGPFSINILKFLAFLSLINLFLFVGLEFQETNVTFSIWLSNTAANVSLSILFDHYFIVFLTVALVVTWSIMNFSLLYGEDPNKNVFLLLTIFLLNMLILTCSNSLFLLFLGWEGVGFLSFLLIKMMNH</sequence>
<name>NU5M_ARBLI</name>
<gene>
    <name type="primary">ND5</name>
</gene>
<feature type="chain" id="PRO_0000118060" description="NADH-ubiquinone oxidoreductase chain 5">
    <location>
        <begin position="1"/>
        <end position="190" status="greater than"/>
    </location>
</feature>
<feature type="transmembrane region" description="Helical" evidence="2">
    <location>
        <begin position="1"/>
        <end position="21"/>
    </location>
</feature>
<feature type="transmembrane region" description="Helical" evidence="2">
    <location>
        <begin position="68"/>
        <end position="88"/>
    </location>
</feature>
<feature type="transmembrane region" description="Helical" evidence="2">
    <location>
        <begin position="94"/>
        <end position="114"/>
    </location>
</feature>
<feature type="transmembrane region" description="Helical" evidence="2">
    <location>
        <begin position="118"/>
        <end position="138"/>
    </location>
</feature>
<feature type="transmembrane region" description="Helical" evidence="2">
    <location>
        <begin position="146"/>
        <end position="166"/>
    </location>
</feature>
<feature type="transmembrane region" description="Helical" evidence="2">
    <location>
        <begin position="167"/>
        <end position="187"/>
    </location>
</feature>
<feature type="sequence variant">
    <original>L</original>
    <variation>S</variation>
    <location>
        <position position="14"/>
    </location>
</feature>
<feature type="non-terminal residue">
    <location>
        <position position="190"/>
    </location>
</feature>
<geneLocation type="mitochondrion"/>